<keyword id="KW-0012">Acyltransferase</keyword>
<keyword id="KW-1003">Cell membrane</keyword>
<keyword id="KW-0472">Membrane</keyword>
<keyword id="KW-0808">Transferase</keyword>
<keyword id="KW-0812">Transmembrane</keyword>
<keyword id="KW-1133">Transmembrane helix</keyword>
<protein>
    <recommendedName>
        <fullName evidence="1">Glucans biosynthesis protein C</fullName>
        <ecNumber evidence="1">2.1.-.-</ecNumber>
    </recommendedName>
</protein>
<sequence>MSSVPAPREYFLDSIRAWLMLLGIPFHISLIYSTHSWHVNSATPSWWLTLFNDFIHAFRMQVFFVISGYFSYMLFLRYPLKRWWKVRVERVGIPMLTAIPLLTLPQFILLQYVKEKTENWPTLSAYEKYNTLAWELISHLWFLLVLVILTTVSIGIFTWFQKRQETSKPRPAAISLVRLSLIFFLLGMAYAAIRRIIFIVYPAILSDGMFNFIVMQTLFYVPFFILGALAFIHPDLKARFTTPSRGCTLGAAVAFIAYLLNQRYGSGDAWMYETESVITMVMGLWMVNVVFSLGHRLLNFQSARVTYFVNASLFIYLVHHPLTLFFGAYITPHISSNLIGFLCGLIFVMGIALILYEIHLRIPLLKFLFSGKPPVKQESRAAIG</sequence>
<accession>A9N5R5</accession>
<evidence type="ECO:0000255" key="1">
    <source>
        <dbReference type="HAMAP-Rule" id="MF_01066"/>
    </source>
</evidence>
<feature type="chain" id="PRO_1000084488" description="Glucans biosynthesis protein C">
    <location>
        <begin position="1"/>
        <end position="384"/>
    </location>
</feature>
<feature type="transmembrane region" description="Helical" evidence="1">
    <location>
        <begin position="17"/>
        <end position="37"/>
    </location>
</feature>
<feature type="transmembrane region" description="Helical" evidence="1">
    <location>
        <begin position="54"/>
        <end position="74"/>
    </location>
</feature>
<feature type="transmembrane region" description="Helical" evidence="1">
    <location>
        <begin position="91"/>
        <end position="111"/>
    </location>
</feature>
<feature type="transmembrane region" description="Helical" evidence="1">
    <location>
        <begin position="140"/>
        <end position="160"/>
    </location>
</feature>
<feature type="transmembrane region" description="Helical" evidence="1">
    <location>
        <begin position="173"/>
        <end position="193"/>
    </location>
</feature>
<feature type="transmembrane region" description="Helical" evidence="1">
    <location>
        <begin position="212"/>
        <end position="232"/>
    </location>
</feature>
<feature type="transmembrane region" description="Helical" evidence="1">
    <location>
        <begin position="240"/>
        <end position="260"/>
    </location>
</feature>
<feature type="transmembrane region" description="Helical" evidence="1">
    <location>
        <begin position="274"/>
        <end position="294"/>
    </location>
</feature>
<feature type="transmembrane region" description="Helical" evidence="1">
    <location>
        <begin position="311"/>
        <end position="331"/>
    </location>
</feature>
<feature type="transmembrane region" description="Helical" evidence="1">
    <location>
        <begin position="338"/>
        <end position="358"/>
    </location>
</feature>
<gene>
    <name evidence="1" type="primary">mdoC</name>
    <name evidence="1" type="synonym">opgC</name>
    <name type="ordered locus">SPAB_02383</name>
</gene>
<dbReference type="EC" id="2.1.-.-" evidence="1"/>
<dbReference type="EMBL" id="CP000886">
    <property type="protein sequence ID" value="ABX67765.1"/>
    <property type="molecule type" value="Genomic_DNA"/>
</dbReference>
<dbReference type="RefSeq" id="WP_000100071.1">
    <property type="nucleotide sequence ID" value="NC_010102.1"/>
</dbReference>
<dbReference type="KEGG" id="spq:SPAB_02383"/>
<dbReference type="PATRIC" id="fig|1016998.12.peg.2255"/>
<dbReference type="HOGENOM" id="CLU_036182_2_0_6"/>
<dbReference type="BioCyc" id="SENT1016998:SPAB_RS09710-MONOMER"/>
<dbReference type="UniPathway" id="UPA00637"/>
<dbReference type="Proteomes" id="UP000008556">
    <property type="component" value="Chromosome"/>
</dbReference>
<dbReference type="GO" id="GO:0005886">
    <property type="term" value="C:plasma membrane"/>
    <property type="evidence" value="ECO:0007669"/>
    <property type="project" value="UniProtKB-SubCell"/>
</dbReference>
<dbReference type="GO" id="GO:0016747">
    <property type="term" value="F:acyltransferase activity, transferring groups other than amino-acyl groups"/>
    <property type="evidence" value="ECO:0007669"/>
    <property type="project" value="InterPro"/>
</dbReference>
<dbReference type="GO" id="GO:0016741">
    <property type="term" value="F:transferase activity, transferring one-carbon groups"/>
    <property type="evidence" value="ECO:0007669"/>
    <property type="project" value="UniProtKB-UniRule"/>
</dbReference>
<dbReference type="GO" id="GO:0009250">
    <property type="term" value="P:glucan biosynthetic process"/>
    <property type="evidence" value="ECO:0007669"/>
    <property type="project" value="UniProtKB-UniRule"/>
</dbReference>
<dbReference type="HAMAP" id="MF_01066">
    <property type="entry name" value="MdoC_OpgC"/>
    <property type="match status" value="1"/>
</dbReference>
<dbReference type="InterPro" id="IPR002656">
    <property type="entry name" value="Acyl_transf_3_dom"/>
</dbReference>
<dbReference type="InterPro" id="IPR050623">
    <property type="entry name" value="Glucan_succinyl_AcylTrfase"/>
</dbReference>
<dbReference type="InterPro" id="IPR023723">
    <property type="entry name" value="Glucans_biosynth_C"/>
</dbReference>
<dbReference type="NCBIfam" id="NF003014">
    <property type="entry name" value="PRK03854.1"/>
    <property type="match status" value="1"/>
</dbReference>
<dbReference type="PANTHER" id="PTHR36927">
    <property type="entry name" value="BLR4337 PROTEIN"/>
    <property type="match status" value="1"/>
</dbReference>
<dbReference type="PANTHER" id="PTHR36927:SF3">
    <property type="entry name" value="GLUCANS BIOSYNTHESIS PROTEIN C"/>
    <property type="match status" value="1"/>
</dbReference>
<dbReference type="Pfam" id="PF01757">
    <property type="entry name" value="Acyl_transf_3"/>
    <property type="match status" value="1"/>
</dbReference>
<proteinExistence type="inferred from homology"/>
<reference key="1">
    <citation type="submission" date="2007-11" db="EMBL/GenBank/DDBJ databases">
        <authorList>
            <consortium name="The Salmonella enterica serovar Paratyphi B Genome Sequencing Project"/>
            <person name="McClelland M."/>
            <person name="Sanderson E.K."/>
            <person name="Porwollik S."/>
            <person name="Spieth J."/>
            <person name="Clifton W.S."/>
            <person name="Fulton R."/>
            <person name="Cordes M."/>
            <person name="Wollam A."/>
            <person name="Shah N."/>
            <person name="Pepin K."/>
            <person name="Bhonagiri V."/>
            <person name="Nash W."/>
            <person name="Johnson M."/>
            <person name="Thiruvilangam P."/>
            <person name="Wilson R."/>
        </authorList>
    </citation>
    <scope>NUCLEOTIDE SEQUENCE [LARGE SCALE GENOMIC DNA]</scope>
    <source>
        <strain>ATCC BAA-1250 / SPB7</strain>
    </source>
</reference>
<organism>
    <name type="scientific">Salmonella paratyphi B (strain ATCC BAA-1250 / SPB7)</name>
    <dbReference type="NCBI Taxonomy" id="1016998"/>
    <lineage>
        <taxon>Bacteria</taxon>
        <taxon>Pseudomonadati</taxon>
        <taxon>Pseudomonadota</taxon>
        <taxon>Gammaproteobacteria</taxon>
        <taxon>Enterobacterales</taxon>
        <taxon>Enterobacteriaceae</taxon>
        <taxon>Salmonella</taxon>
    </lineage>
</organism>
<comment type="function">
    <text evidence="1">Necessary for the succinyl substitution of periplasmic glucans. Could catalyze the transfer of succinyl residues from the cytoplasmic side of the membrane to the nascent glucan backbones on the periplasmic side of the membrane.</text>
</comment>
<comment type="pathway">
    <text evidence="1">Glycan metabolism; osmoregulated periplasmic glucan (OPG) biosynthesis.</text>
</comment>
<comment type="subcellular location">
    <subcellularLocation>
        <location evidence="1">Cell membrane</location>
        <topology evidence="1">Multi-pass membrane protein</topology>
    </subcellularLocation>
</comment>
<comment type="similarity">
    <text evidence="1">Belongs to the acyltransferase 3 family. OpgC subfamily.</text>
</comment>
<name>OPGC_SALPB</name>